<name>DNLI_MONPV</name>
<organism>
    <name type="scientific">Monkeypox virus</name>
    <dbReference type="NCBI Taxonomy" id="10244"/>
    <lineage>
        <taxon>Viruses</taxon>
        <taxon>Varidnaviria</taxon>
        <taxon>Bamfordvirae</taxon>
        <taxon>Nucleocytoviricota</taxon>
        <taxon>Pokkesviricetes</taxon>
        <taxon>Chitovirales</taxon>
        <taxon>Poxviridae</taxon>
        <taxon>Chordopoxvirinae</taxon>
        <taxon>Orthopoxvirus</taxon>
    </lineage>
</organism>
<protein>
    <recommendedName>
        <fullName>DNA ligase</fullName>
        <ecNumber>6.5.1.1</ecNumber>
    </recommendedName>
</protein>
<feature type="chain" id="PRO_0000457609" description="DNA ligase">
    <location>
        <begin position="1"/>
        <end position="559"/>
    </location>
</feature>
<feature type="active site" description="N6-AMP-lysine intermediate" evidence="3">
    <location>
        <position position="233"/>
    </location>
</feature>
<feature type="binding site" evidence="2">
    <location>
        <position position="231"/>
    </location>
    <ligand>
        <name>ATP</name>
        <dbReference type="ChEBI" id="CHEBI:30616"/>
    </ligand>
</feature>
<feature type="binding site" evidence="2">
    <location>
        <position position="238"/>
    </location>
    <ligand>
        <name>ATP</name>
        <dbReference type="ChEBI" id="CHEBI:30616"/>
    </ligand>
</feature>
<feature type="binding site" evidence="2">
    <location>
        <position position="285"/>
    </location>
    <ligand>
        <name>ATP</name>
        <dbReference type="ChEBI" id="CHEBI:30616"/>
    </ligand>
</feature>
<feature type="binding site" evidence="2">
    <location>
        <position position="285"/>
    </location>
    <ligand>
        <name>Mg(2+)</name>
        <dbReference type="ChEBI" id="CHEBI:18420"/>
        <label>1</label>
    </ligand>
</feature>
<feature type="binding site" evidence="2">
    <location>
        <position position="379"/>
    </location>
    <ligand>
        <name>Mg(2+)</name>
        <dbReference type="ChEBI" id="CHEBI:18420"/>
        <label>2</label>
    </ligand>
</feature>
<feature type="binding site" evidence="2">
    <location>
        <position position="384"/>
    </location>
    <ligand>
        <name>ATP</name>
        <dbReference type="ChEBI" id="CHEBI:30616"/>
    </ligand>
</feature>
<feature type="binding site" evidence="2">
    <location>
        <position position="399"/>
    </location>
    <ligand>
        <name>ATP</name>
        <dbReference type="ChEBI" id="CHEBI:30616"/>
    </ligand>
</feature>
<organismHost>
    <name type="scientific">Cynomys gunnisoni</name>
    <name type="common">Gunnison's prairie dog</name>
    <name type="synonym">Spermophilus gunnisoni</name>
    <dbReference type="NCBI Taxonomy" id="45479"/>
</organismHost>
<organismHost>
    <name type="scientific">Cynomys leucurus</name>
    <name type="common">White-tailed prairie dog</name>
    <dbReference type="NCBI Taxonomy" id="99825"/>
</organismHost>
<organismHost>
    <name type="scientific">Cynomys ludovicianus</name>
    <name type="common">Black-tailed prairie dog</name>
    <dbReference type="NCBI Taxonomy" id="45480"/>
</organismHost>
<organismHost>
    <name type="scientific">Cynomys mexicanus</name>
    <name type="common">Mexican prairie dog</name>
    <dbReference type="NCBI Taxonomy" id="99826"/>
</organismHost>
<organismHost>
    <name type="scientific">Cynomys parvidens</name>
    <name type="common">Utah prairie dog</name>
    <dbReference type="NCBI Taxonomy" id="99827"/>
</organismHost>
<organismHost>
    <name type="scientific">Gliridae</name>
    <name type="common">dormice</name>
    <dbReference type="NCBI Taxonomy" id="30650"/>
</organismHost>
<organismHost>
    <name type="scientific">Heliosciurus ruwenzorii</name>
    <name type="common">Ruwenzori sun squirrel</name>
    <dbReference type="NCBI Taxonomy" id="226685"/>
</organismHost>
<organismHost>
    <name type="scientific">Homo sapiens</name>
    <name type="common">Human</name>
    <dbReference type="NCBI Taxonomy" id="9606"/>
</organismHost>
<organismHost>
    <name type="scientific">Mus musculus</name>
    <name type="common">Mouse</name>
    <dbReference type="NCBI Taxonomy" id="10090"/>
</organismHost>
<accession>A0A7H0DNE6</accession>
<gene>
    <name type="primary">OPG180</name>
    <name type="synonym">LIG</name>
    <name type="ORF">MPXVgp160</name>
</gene>
<reference key="1">
    <citation type="journal article" date="2022" name="J. Infect. Dis.">
        <title>Exportation of Monkeypox virus from the African continent.</title>
        <authorList>
            <person name="Mauldin M.R."/>
            <person name="McCollum A.M."/>
            <person name="Nakazawa Y.J."/>
            <person name="Mandra A."/>
            <person name="Whitehouse E.R."/>
            <person name="Davidson W."/>
            <person name="Zhao H."/>
            <person name="Gao J."/>
            <person name="Li Y."/>
            <person name="Doty J."/>
            <person name="Yinka-Ogunleye A."/>
            <person name="Akinpelu A."/>
            <person name="Aruna O."/>
            <person name="Naidoo D."/>
            <person name="Lewandowski K."/>
            <person name="Afrough B."/>
            <person name="Graham V."/>
            <person name="Aarons E."/>
            <person name="Hewson R."/>
            <person name="Vipond R."/>
            <person name="Dunning J."/>
            <person name="Chand M."/>
            <person name="Brown C."/>
            <person name="Cohen-Gihon I."/>
            <person name="Erez N."/>
            <person name="Shifman O."/>
            <person name="Israeli O."/>
            <person name="Sharon M."/>
            <person name="Schwartz E."/>
            <person name="Beth-Din A."/>
            <person name="Zvi A."/>
            <person name="Mak T.M."/>
            <person name="Ng Y.K."/>
            <person name="Cui L."/>
            <person name="Lin R.T.P."/>
            <person name="Olson V.A."/>
            <person name="Brooks T."/>
            <person name="Paran N."/>
            <person name="Ihekweazu C."/>
            <person name="Reynolds M.G."/>
        </authorList>
    </citation>
    <scope>NUCLEOTIDE SEQUENCE [LARGE SCALE GENOMIC DNA]</scope>
    <source>
        <strain>MPXV-M5312_HM12_Rivers</strain>
    </source>
</reference>
<keyword id="KW-0067">ATP-binding</keyword>
<keyword id="KW-0131">Cell cycle</keyword>
<keyword id="KW-0132">Cell division</keyword>
<keyword id="KW-0227">DNA damage</keyword>
<keyword id="KW-0233">DNA recombination</keyword>
<keyword id="KW-0234">DNA repair</keyword>
<keyword id="KW-0235">DNA replication</keyword>
<keyword id="KW-0244">Early protein</keyword>
<keyword id="KW-1035">Host cytoplasm</keyword>
<keyword id="KW-0436">Ligase</keyword>
<keyword id="KW-0460">Magnesium</keyword>
<keyword id="KW-0479">Metal-binding</keyword>
<keyword id="KW-0547">Nucleotide-binding</keyword>
<keyword id="KW-1185">Reference proteome</keyword>
<dbReference type="EC" id="6.5.1.1"/>
<dbReference type="EMBL" id="MT903340">
    <property type="protein sequence ID" value="QNP13029.1"/>
    <property type="molecule type" value="Genomic_DNA"/>
</dbReference>
<dbReference type="RefSeq" id="YP_010377156.1">
    <property type="nucleotide sequence ID" value="NC_063383.1"/>
</dbReference>
<dbReference type="SMR" id="A0A7H0DNE6"/>
<dbReference type="GeneID" id="72551570"/>
<dbReference type="Proteomes" id="UP000516359">
    <property type="component" value="Genome"/>
</dbReference>
<dbReference type="GO" id="GO:0030430">
    <property type="term" value="C:host cell cytoplasm"/>
    <property type="evidence" value="ECO:0007669"/>
    <property type="project" value="UniProtKB-SubCell"/>
</dbReference>
<dbReference type="GO" id="GO:0005524">
    <property type="term" value="F:ATP binding"/>
    <property type="evidence" value="ECO:0007669"/>
    <property type="project" value="UniProtKB-KW"/>
</dbReference>
<dbReference type="GO" id="GO:0003677">
    <property type="term" value="F:DNA binding"/>
    <property type="evidence" value="ECO:0007669"/>
    <property type="project" value="InterPro"/>
</dbReference>
<dbReference type="GO" id="GO:0003910">
    <property type="term" value="F:DNA ligase (ATP) activity"/>
    <property type="evidence" value="ECO:0007669"/>
    <property type="project" value="InterPro"/>
</dbReference>
<dbReference type="GO" id="GO:0046872">
    <property type="term" value="F:metal ion binding"/>
    <property type="evidence" value="ECO:0007669"/>
    <property type="project" value="UniProtKB-KW"/>
</dbReference>
<dbReference type="GO" id="GO:0051301">
    <property type="term" value="P:cell division"/>
    <property type="evidence" value="ECO:0007669"/>
    <property type="project" value="UniProtKB-KW"/>
</dbReference>
<dbReference type="GO" id="GO:0071897">
    <property type="term" value="P:DNA biosynthetic process"/>
    <property type="evidence" value="ECO:0007669"/>
    <property type="project" value="InterPro"/>
</dbReference>
<dbReference type="GO" id="GO:0006310">
    <property type="term" value="P:DNA recombination"/>
    <property type="evidence" value="ECO:0007669"/>
    <property type="project" value="UniProtKB-KW"/>
</dbReference>
<dbReference type="GO" id="GO:0006302">
    <property type="term" value="P:double-strand break repair"/>
    <property type="evidence" value="ECO:0007669"/>
    <property type="project" value="TreeGrafter"/>
</dbReference>
<dbReference type="GO" id="GO:0006273">
    <property type="term" value="P:lagging strand elongation"/>
    <property type="evidence" value="ECO:0007669"/>
    <property type="project" value="TreeGrafter"/>
</dbReference>
<dbReference type="CDD" id="cd07967">
    <property type="entry name" value="OBF_DNA_ligase_III"/>
    <property type="match status" value="1"/>
</dbReference>
<dbReference type="FunFam" id="2.40.50.140:FF:000085">
    <property type="entry name" value="DNA ligase"/>
    <property type="match status" value="1"/>
</dbReference>
<dbReference type="FunFam" id="3.30.470.30:FF:000003">
    <property type="entry name" value="DNA ligase"/>
    <property type="match status" value="1"/>
</dbReference>
<dbReference type="Gene3D" id="3.30.1490.70">
    <property type="match status" value="1"/>
</dbReference>
<dbReference type="Gene3D" id="1.10.3260.10">
    <property type="entry name" value="DNA ligase, ATP-dependent, N-terminal domain"/>
    <property type="match status" value="1"/>
</dbReference>
<dbReference type="Gene3D" id="3.30.470.30">
    <property type="entry name" value="DNA ligase/mRNA capping enzyme"/>
    <property type="match status" value="1"/>
</dbReference>
<dbReference type="Gene3D" id="2.40.50.140">
    <property type="entry name" value="Nucleic acid-binding proteins"/>
    <property type="match status" value="1"/>
</dbReference>
<dbReference type="InterPro" id="IPR050191">
    <property type="entry name" value="ATP-dep_DNA_ligase"/>
</dbReference>
<dbReference type="InterPro" id="IPR000977">
    <property type="entry name" value="DNA_ligase_ATP-dep"/>
</dbReference>
<dbReference type="InterPro" id="IPR012309">
    <property type="entry name" value="DNA_ligase_ATP-dep_C"/>
</dbReference>
<dbReference type="InterPro" id="IPR012310">
    <property type="entry name" value="DNA_ligase_ATP-dep_cent"/>
</dbReference>
<dbReference type="InterPro" id="IPR016059">
    <property type="entry name" value="DNA_ligase_ATP-dep_CS"/>
</dbReference>
<dbReference type="InterPro" id="IPR012308">
    <property type="entry name" value="DNA_ligase_ATP-dep_N"/>
</dbReference>
<dbReference type="InterPro" id="IPR036599">
    <property type="entry name" value="DNA_ligase_N_sf"/>
</dbReference>
<dbReference type="InterPro" id="IPR012340">
    <property type="entry name" value="NA-bd_OB-fold"/>
</dbReference>
<dbReference type="NCBIfam" id="TIGR00574">
    <property type="entry name" value="dnl1"/>
    <property type="match status" value="1"/>
</dbReference>
<dbReference type="PANTHER" id="PTHR45674">
    <property type="entry name" value="DNA LIGASE 1/3 FAMILY MEMBER"/>
    <property type="match status" value="1"/>
</dbReference>
<dbReference type="PANTHER" id="PTHR45674:SF9">
    <property type="entry name" value="DNA LIGASE 3"/>
    <property type="match status" value="1"/>
</dbReference>
<dbReference type="Pfam" id="PF04679">
    <property type="entry name" value="DNA_ligase_A_C"/>
    <property type="match status" value="1"/>
</dbReference>
<dbReference type="Pfam" id="PF01068">
    <property type="entry name" value="DNA_ligase_A_M"/>
    <property type="match status" value="1"/>
</dbReference>
<dbReference type="Pfam" id="PF04675">
    <property type="entry name" value="DNA_ligase_A_N"/>
    <property type="match status" value="1"/>
</dbReference>
<dbReference type="SUPFAM" id="SSF117018">
    <property type="entry name" value="ATP-dependent DNA ligase DNA-binding domain"/>
    <property type="match status" value="1"/>
</dbReference>
<dbReference type="SUPFAM" id="SSF56091">
    <property type="entry name" value="DNA ligase/mRNA capping enzyme, catalytic domain"/>
    <property type="match status" value="1"/>
</dbReference>
<dbReference type="SUPFAM" id="SSF50249">
    <property type="entry name" value="Nucleic acid-binding proteins"/>
    <property type="match status" value="1"/>
</dbReference>
<dbReference type="PROSITE" id="PS00697">
    <property type="entry name" value="DNA_LIGASE_A1"/>
    <property type="match status" value="1"/>
</dbReference>
<dbReference type="PROSITE" id="PS00333">
    <property type="entry name" value="DNA_LIGASE_A2"/>
    <property type="match status" value="1"/>
</dbReference>
<dbReference type="PROSITE" id="PS50160">
    <property type="entry name" value="DNA_LIGASE_A3"/>
    <property type="match status" value="1"/>
</dbReference>
<proteinExistence type="evidence at transcript level"/>
<sequence>MTSLREFRKLCCDIYHASGYKEKSKLIRDFITDRDDTDTYLIIKLLLPGLDDRMYNMNDKQIIKLYSIIFKQSQEDMLQDLGYGYIGDTIRTFFKENTEIRPRDKSILTLEEVDSFLTTLSSVTKESHQIKLLTDIASVCTCNDLKCVVMLIDKDLKIKAGPRYVLNAISPHAYDVFRKSNNLKEIIENAAKQNLDSISISVMTPINPMLAESCDSVNKAFKKFPSGMFAEVKYDGERVQVHKKNNEFAFFSRNMKPVLSHKVDYLKEYIPKAFKKATSIVLDSEIVLVDEHNVPLPFGSLGIHKKKEYKNSNMCLFVFDCLYFDGFDMTDIPLYERRSFLKDVMVEIPNRIVFSELTNISNESQLTDVLDDALTRKLEGLVLKDINGVYEPGKRRWLKIKRDYLNEGSMADSADLVVLGAYYGKGGKGGIMAVFLMGCYDDESGKWKTVTKCSGHDDNTLRVLQDQLTMVKINKDPKKIPEWLVVNKIYIPDFVVDDPKQSQIWEISGAEFTSSKSHTANGISIRFPRFTRIREDKTWKESTHLNDLVNLTKSLNSYI</sequence>
<evidence type="ECO:0000250" key="1">
    <source>
        <dbReference type="UniProtKB" id="P16272"/>
    </source>
</evidence>
<evidence type="ECO:0000250" key="2">
    <source>
        <dbReference type="UniProtKB" id="P18858"/>
    </source>
</evidence>
<evidence type="ECO:0000255" key="3">
    <source>
        <dbReference type="PROSITE-ProRule" id="PRU10135"/>
    </source>
</evidence>
<evidence type="ECO:0000305" key="4"/>
<comment type="function">
    <text evidence="1">DNA ligase that seals nicks in double-stranded DNA during DNA replication, DNA recombination and DNA repair. Recruits cellular topoisomerase II to sites of viral replication and assembly.</text>
</comment>
<comment type="catalytic activity">
    <reaction evidence="3">
        <text>ATP + (deoxyribonucleotide)n-3'-hydroxyl + 5'-phospho-(deoxyribonucleotide)m = (deoxyribonucleotide)n+m + AMP + diphosphate.</text>
        <dbReference type="EC" id="6.5.1.1"/>
    </reaction>
</comment>
<comment type="cofactor">
    <cofactor evidence="1">
        <name>Mg(2+)</name>
        <dbReference type="ChEBI" id="CHEBI:18420"/>
    </cofactor>
</comment>
<comment type="subunit">
    <text evidence="1">Interacts with host TOP2A and TOP2B.</text>
</comment>
<comment type="subcellular location">
    <subcellularLocation>
        <location evidence="1">Host cytoplasm</location>
    </subcellularLocation>
    <text evidence="1">Found in sites viral of replication and assembly.</text>
</comment>
<comment type="induction">
    <text>Expressed in the early phase of the viral replicative cycle.</text>
</comment>
<comment type="similarity">
    <text evidence="4">Belongs to the ATP-dependent DNA ligase family.</text>
</comment>